<protein>
    <recommendedName>
        <fullName>Neuromedin-B</fullName>
    </recommendedName>
    <component>
        <recommendedName>
            <fullName>Neuromedin-B-32</fullName>
        </recommendedName>
    </component>
    <component>
        <recommendedName>
            <fullName>Neuromedin-B</fullName>
        </recommendedName>
    </component>
</protein>
<name>NMB_HUMAN</name>
<comment type="function">
    <text evidence="1 2 4">Stimulates smooth muscle contraction (By similarity). Induces sighing by acting directly on the pre-Botzinger complex, a cluster of several thousand neurons in the ventrolateral medulla responsible for inspiration during respiratory activity (By similarity). Contributes to the induction of sneezing following exposure to chemical irritants or allergens which causes release of NMB by nasal sensory neurons and activation of NMBR-expressing neurons in the sneeze-evoking region of the brainstem (By similarity). These in turn activate neurons of the caudal ventral respiratory group, giving rise to the sneezing response (By similarity). Contributes to induction of acute itch, possibly through activation of the NMBR receptor on dorsal root ganglion neurons (By similarity). Increases expression of NMBR and steroidogenic mediators STAR, CYP11A1 and HSD3B1 in Leydig cells, induces secretion of testosterone by Leydig cells and also promotes Leydig cell proliferation (By similarity). Plays a role in the innate immune response to influenza A virus infection by enhancing interferon alpha expression and reducing expression of IL6 (PubMed:31601264). Plays a role in CSF1-induced proliferation of osteoclast precursors by contributing to the positive regulation of the expression of the CSF1 receptor CSF1R (By similarity).</text>
</comment>
<comment type="interaction">
    <interactant intactId="EBI-7964376">
        <id>P08949</id>
    </interactant>
    <interactant intactId="EBI-514538">
        <id>Q13490</id>
        <label>BIRC2</label>
    </interactant>
    <organismsDiffer>false</organismsDiffer>
    <experiments>3</experiments>
</comment>
<comment type="interaction">
    <interactant intactId="EBI-12302085">
        <id>P08949-2</id>
    </interactant>
    <interactant intactId="EBI-514538">
        <id>Q13490</id>
        <label>BIRC2</label>
    </interactant>
    <organismsDiffer>false</organismsDiffer>
    <experiments>6</experiments>
</comment>
<comment type="interaction">
    <interactant intactId="EBI-12302085">
        <id>P08949-2</id>
    </interactant>
    <interactant intactId="EBI-448202">
        <id>O95257</id>
        <label>GADD45G</label>
    </interactant>
    <organismsDiffer>false</organismsDiffer>
    <experiments>3</experiments>
</comment>
<comment type="subcellular location">
    <subcellularLocation>
        <location evidence="2">Secreted</location>
    </subcellularLocation>
    <subcellularLocation>
        <location evidence="2">Cell projection</location>
        <location evidence="2">Neuron projection</location>
    </subcellularLocation>
    <text evidence="2">In neurons of the retrotrapezoid nucleus//parafacial respiratory group, expressed on neuron projections which project into the pre-Botzinger complex.</text>
</comment>
<comment type="alternative products">
    <event type="alternative splicing"/>
    <isoform>
        <id>P08949-1</id>
        <name>1</name>
        <sequence type="displayed"/>
    </isoform>
    <isoform>
        <id>P08949-2</id>
        <name>2</name>
        <sequence type="described" ref="VSP_000548"/>
    </isoform>
</comment>
<comment type="induction">
    <text evidence="4">Up-regulated in response to infection with influenza A virus.</text>
</comment>
<comment type="similarity">
    <text evidence="6">Belongs to the bombesin/neuromedin-B/ranatensin family.</text>
</comment>
<keyword id="KW-0002">3D-structure</keyword>
<keyword id="KW-0025">Alternative splicing</keyword>
<keyword id="KW-0027">Amidation</keyword>
<keyword id="KW-0966">Cell projection</keyword>
<keyword id="KW-0165">Cleavage on pair of basic residues</keyword>
<keyword id="KW-0391">Immunity</keyword>
<keyword id="KW-0399">Innate immunity</keyword>
<keyword id="KW-1267">Proteomics identification</keyword>
<keyword id="KW-1185">Reference proteome</keyword>
<keyword id="KW-0964">Secreted</keyword>
<keyword id="KW-0732">Signal</keyword>
<accession>P08949</accession>
<accession>Q96A06</accession>
<accession>Q96HH5</accession>
<dbReference type="EMBL" id="M21551">
    <property type="protein sequence ID" value="AAA59934.1"/>
    <property type="molecule type" value="mRNA"/>
</dbReference>
<dbReference type="EMBL" id="AC048382">
    <property type="status" value="NOT_ANNOTATED_CDS"/>
    <property type="molecule type" value="Genomic_DNA"/>
</dbReference>
<dbReference type="EMBL" id="BC007407">
    <property type="protein sequence ID" value="AAH07407.1"/>
    <property type="molecule type" value="mRNA"/>
</dbReference>
<dbReference type="EMBL" id="BC007431">
    <property type="protein sequence ID" value="AAH07431.1"/>
    <property type="molecule type" value="mRNA"/>
</dbReference>
<dbReference type="EMBL" id="BC008603">
    <property type="protein sequence ID" value="AAH08603.1"/>
    <property type="molecule type" value="mRNA"/>
</dbReference>
<dbReference type="CCDS" id="CCDS10332.1">
    <molecule id="P08949-1"/>
</dbReference>
<dbReference type="CCDS" id="CCDS42076.1">
    <molecule id="P08949-2"/>
</dbReference>
<dbReference type="PIR" id="A28945">
    <property type="entry name" value="A28945"/>
</dbReference>
<dbReference type="RefSeq" id="NP_066563.2">
    <molecule id="P08949-1"/>
    <property type="nucleotide sequence ID" value="NM_021077.3"/>
</dbReference>
<dbReference type="RefSeq" id="NP_995580.1">
    <molecule id="P08949-2"/>
    <property type="nucleotide sequence ID" value="NM_205858.2"/>
</dbReference>
<dbReference type="PDB" id="1C98">
    <property type="method" value="NMR"/>
    <property type="chains" value="A=47-56"/>
</dbReference>
<dbReference type="PDB" id="1C9A">
    <property type="method" value="NMR"/>
    <property type="chains" value="A=47-56"/>
</dbReference>
<dbReference type="PDB" id="8H0P">
    <property type="method" value="EM"/>
    <property type="resolution" value="3.15 A"/>
    <property type="chains" value="L=48-57"/>
</dbReference>
<dbReference type="PDBsum" id="1C98"/>
<dbReference type="PDBsum" id="1C9A"/>
<dbReference type="PDBsum" id="8H0P"/>
<dbReference type="SMR" id="P08949"/>
<dbReference type="BioGRID" id="110892">
    <property type="interactions" value="33"/>
</dbReference>
<dbReference type="FunCoup" id="P08949">
    <property type="interactions" value="423"/>
</dbReference>
<dbReference type="IntAct" id="P08949">
    <property type="interactions" value="32"/>
</dbReference>
<dbReference type="MINT" id="P08949"/>
<dbReference type="STRING" id="9606.ENSP00000378089"/>
<dbReference type="GlyGen" id="P08949">
    <property type="glycosylation" value="9 sites, 1 O-linked glycan (9 sites)"/>
</dbReference>
<dbReference type="iPTMnet" id="P08949"/>
<dbReference type="PhosphoSitePlus" id="P08949"/>
<dbReference type="BioMuta" id="NMB"/>
<dbReference type="DMDM" id="281185514"/>
<dbReference type="MassIVE" id="P08949"/>
<dbReference type="PaxDb" id="9606-ENSP00000378089"/>
<dbReference type="PeptideAtlas" id="P08949"/>
<dbReference type="ProteomicsDB" id="52178">
    <molecule id="P08949-1"/>
</dbReference>
<dbReference type="ProteomicsDB" id="52179">
    <molecule id="P08949-2"/>
</dbReference>
<dbReference type="TopDownProteomics" id="P08949-2">
    <molecule id="P08949-2"/>
</dbReference>
<dbReference type="Antibodypedia" id="43613">
    <property type="antibodies" value="159 antibodies from 26 providers"/>
</dbReference>
<dbReference type="DNASU" id="4828"/>
<dbReference type="Ensembl" id="ENST00000360476.8">
    <molecule id="P08949-1"/>
    <property type="protein sequence ID" value="ENSP00000353664.3"/>
    <property type="gene ID" value="ENSG00000197696.10"/>
</dbReference>
<dbReference type="Ensembl" id="ENST00000394588.3">
    <molecule id="P08949-2"/>
    <property type="protein sequence ID" value="ENSP00000378089.3"/>
    <property type="gene ID" value="ENSG00000197696.10"/>
</dbReference>
<dbReference type="Ensembl" id="ENST00000708236.1">
    <molecule id="P08949-2"/>
    <property type="protein sequence ID" value="ENSP00000517134.1"/>
    <property type="gene ID" value="ENSG00000291631.1"/>
</dbReference>
<dbReference type="Ensembl" id="ENST00000708237.1">
    <molecule id="P08949-1"/>
    <property type="protein sequence ID" value="ENSP00000517135.1"/>
    <property type="gene ID" value="ENSG00000291631.1"/>
</dbReference>
<dbReference type="GeneID" id="4828"/>
<dbReference type="KEGG" id="hsa:4828"/>
<dbReference type="MANE-Select" id="ENST00000360476.8">
    <property type="protein sequence ID" value="ENSP00000353664.3"/>
    <property type="RefSeq nucleotide sequence ID" value="NM_021077.4"/>
    <property type="RefSeq protein sequence ID" value="NP_066563.2"/>
</dbReference>
<dbReference type="UCSC" id="uc002bkz.4">
    <molecule id="P08949-1"/>
    <property type="organism name" value="human"/>
</dbReference>
<dbReference type="AGR" id="HGNC:7842"/>
<dbReference type="CTD" id="4828"/>
<dbReference type="DisGeNET" id="4828"/>
<dbReference type="GeneCards" id="NMB"/>
<dbReference type="HGNC" id="HGNC:7842">
    <property type="gene designation" value="NMB"/>
</dbReference>
<dbReference type="HPA" id="ENSG00000197696">
    <property type="expression patterns" value="Tissue enhanced (adipose)"/>
</dbReference>
<dbReference type="MIM" id="162340">
    <property type="type" value="gene"/>
</dbReference>
<dbReference type="neXtProt" id="NX_P08949"/>
<dbReference type="OpenTargets" id="ENSG00000197696"/>
<dbReference type="PharmGKB" id="PA31654"/>
<dbReference type="VEuPathDB" id="HostDB:ENSG00000197696"/>
<dbReference type="eggNOG" id="ENOG502S66V">
    <property type="taxonomic scope" value="Eukaryota"/>
</dbReference>
<dbReference type="GeneTree" id="ENSGT00940000154470"/>
<dbReference type="HOGENOM" id="CLU_136527_0_0_1"/>
<dbReference type="InParanoid" id="P08949"/>
<dbReference type="OMA" id="PSGCKSW"/>
<dbReference type="OrthoDB" id="9535999at2759"/>
<dbReference type="PAN-GO" id="P08949">
    <property type="GO annotations" value="4 GO annotations based on evolutionary models"/>
</dbReference>
<dbReference type="PhylomeDB" id="P08949"/>
<dbReference type="TreeFam" id="TF336860"/>
<dbReference type="PathwayCommons" id="P08949"/>
<dbReference type="Reactome" id="R-HSA-375276">
    <property type="pathway name" value="Peptide ligand-binding receptors"/>
</dbReference>
<dbReference type="Reactome" id="R-HSA-416476">
    <property type="pathway name" value="G alpha (q) signalling events"/>
</dbReference>
<dbReference type="SignaLink" id="P08949"/>
<dbReference type="SIGNOR" id="P08949"/>
<dbReference type="BioGRID-ORCS" id="4828">
    <property type="hits" value="9 hits in 1142 CRISPR screens"/>
</dbReference>
<dbReference type="ChiTaRS" id="NMB">
    <property type="organism name" value="human"/>
</dbReference>
<dbReference type="EvolutionaryTrace" id="P08949"/>
<dbReference type="GenomeRNAi" id="4828"/>
<dbReference type="Pharos" id="P08949">
    <property type="development level" value="Tbio"/>
</dbReference>
<dbReference type="PRO" id="PR:P08949"/>
<dbReference type="Proteomes" id="UP000005640">
    <property type="component" value="Chromosome 15"/>
</dbReference>
<dbReference type="RNAct" id="P08949">
    <property type="molecule type" value="protein"/>
</dbReference>
<dbReference type="Bgee" id="ENSG00000197696">
    <property type="expression patterns" value="Expressed in type B pancreatic cell and 151 other cell types or tissues"/>
</dbReference>
<dbReference type="GO" id="GO:0005576">
    <property type="term" value="C:extracellular region"/>
    <property type="evidence" value="ECO:0000304"/>
    <property type="project" value="Reactome"/>
</dbReference>
<dbReference type="GO" id="GO:0005615">
    <property type="term" value="C:extracellular space"/>
    <property type="evidence" value="ECO:0000250"/>
    <property type="project" value="UniProtKB"/>
</dbReference>
<dbReference type="GO" id="GO:0043005">
    <property type="term" value="C:neuron projection"/>
    <property type="evidence" value="ECO:0000250"/>
    <property type="project" value="UniProtKB"/>
</dbReference>
<dbReference type="GO" id="GO:0005179">
    <property type="term" value="F:hormone activity"/>
    <property type="evidence" value="ECO:0000304"/>
    <property type="project" value="ProtInc"/>
</dbReference>
<dbReference type="GO" id="GO:0031710">
    <property type="term" value="F:neuromedin B receptor binding"/>
    <property type="evidence" value="ECO:0000318"/>
    <property type="project" value="GO_Central"/>
</dbReference>
<dbReference type="GO" id="GO:0005184">
    <property type="term" value="F:neuropeptide hormone activity"/>
    <property type="evidence" value="ECO:0000318"/>
    <property type="project" value="GO_Central"/>
</dbReference>
<dbReference type="GO" id="GO:0140374">
    <property type="term" value="P:antiviral innate immune response"/>
    <property type="evidence" value="ECO:0000250"/>
    <property type="project" value="UniProtKB"/>
</dbReference>
<dbReference type="GO" id="GO:0050482">
    <property type="term" value="P:arachidonate secretion"/>
    <property type="evidence" value="ECO:0007669"/>
    <property type="project" value="Ensembl"/>
</dbReference>
<dbReference type="GO" id="GO:0007267">
    <property type="term" value="P:cell-cell signaling"/>
    <property type="evidence" value="ECO:0000304"/>
    <property type="project" value="ProtInc"/>
</dbReference>
<dbReference type="GO" id="GO:0160024">
    <property type="term" value="P:Leydig cell proliferation"/>
    <property type="evidence" value="ECO:0000250"/>
    <property type="project" value="UniProtKB"/>
</dbReference>
<dbReference type="GO" id="GO:0046888">
    <property type="term" value="P:negative regulation of hormone secretion"/>
    <property type="evidence" value="ECO:0007669"/>
    <property type="project" value="Ensembl"/>
</dbReference>
<dbReference type="GO" id="GO:0032715">
    <property type="term" value="P:negative regulation of interleukin-6 production"/>
    <property type="evidence" value="ECO:0000250"/>
    <property type="project" value="UniProtKB"/>
</dbReference>
<dbReference type="GO" id="GO:0007218">
    <property type="term" value="P:neuropeptide signaling pathway"/>
    <property type="evidence" value="ECO:0007669"/>
    <property type="project" value="InterPro"/>
</dbReference>
<dbReference type="GO" id="GO:0007204">
    <property type="term" value="P:positive regulation of cytosolic calcium ion concentration"/>
    <property type="evidence" value="ECO:0007669"/>
    <property type="project" value="Ensembl"/>
</dbReference>
<dbReference type="GO" id="GO:0046887">
    <property type="term" value="P:positive regulation of hormone secretion"/>
    <property type="evidence" value="ECO:0000318"/>
    <property type="project" value="GO_Central"/>
</dbReference>
<dbReference type="GO" id="GO:0032727">
    <property type="term" value="P:positive regulation of interferon-alpha production"/>
    <property type="evidence" value="ECO:0000250"/>
    <property type="project" value="UniProtKB"/>
</dbReference>
<dbReference type="GO" id="GO:0090290">
    <property type="term" value="P:positive regulation of osteoclast proliferation"/>
    <property type="evidence" value="ECO:0000250"/>
    <property type="project" value="UniProtKB"/>
</dbReference>
<dbReference type="GO" id="GO:1903942">
    <property type="term" value="P:positive regulation of respiratory gaseous exchange"/>
    <property type="evidence" value="ECO:0000250"/>
    <property type="project" value="UniProtKB"/>
</dbReference>
<dbReference type="GO" id="GO:2000845">
    <property type="term" value="P:positive regulation of testosterone secretion"/>
    <property type="evidence" value="ECO:0000250"/>
    <property type="project" value="UniProtKB"/>
</dbReference>
<dbReference type="GO" id="GO:0160025">
    <property type="term" value="P:sensory perception of itch"/>
    <property type="evidence" value="ECO:0000250"/>
    <property type="project" value="UniProtKB"/>
</dbReference>
<dbReference type="GO" id="GO:0007165">
    <property type="term" value="P:signal transduction"/>
    <property type="evidence" value="ECO:0000304"/>
    <property type="project" value="ProtInc"/>
</dbReference>
<dbReference type="GO" id="GO:0160023">
    <property type="term" value="P:sneeze reflex"/>
    <property type="evidence" value="ECO:0000250"/>
    <property type="project" value="UniProtKB"/>
</dbReference>
<dbReference type="InterPro" id="IPR000874">
    <property type="entry name" value="Bombesin"/>
</dbReference>
<dbReference type="PANTHER" id="PTHR16866">
    <property type="entry name" value="GASTRIN-RELEASING PEPTIDE"/>
    <property type="match status" value="1"/>
</dbReference>
<dbReference type="PANTHER" id="PTHR16866:SF3">
    <property type="entry name" value="NEUROMEDIN-B"/>
    <property type="match status" value="1"/>
</dbReference>
<dbReference type="Pfam" id="PF02044">
    <property type="entry name" value="Bombesin"/>
    <property type="match status" value="1"/>
</dbReference>
<dbReference type="PROSITE" id="PS00257">
    <property type="entry name" value="BOMBESIN"/>
    <property type="match status" value="1"/>
</dbReference>
<evidence type="ECO:0000250" key="1">
    <source>
        <dbReference type="UniProtKB" id="P01297"/>
    </source>
</evidence>
<evidence type="ECO:0000250" key="2">
    <source>
        <dbReference type="UniProtKB" id="Q9CR53"/>
    </source>
</evidence>
<evidence type="ECO:0000269" key="3">
    <source>
    </source>
</evidence>
<evidence type="ECO:0000269" key="4">
    <source>
    </source>
</evidence>
<evidence type="ECO:0000303" key="5">
    <source>
    </source>
</evidence>
<evidence type="ECO:0000305" key="6"/>
<evidence type="ECO:0007829" key="7">
    <source>
        <dbReference type="PDB" id="8H0P"/>
    </source>
</evidence>
<reference key="1">
    <citation type="journal article" date="1988" name="J. Biol. Chem.">
        <title>Molecular cloning of cDNAs encoding the human bombesin-like peptide neuromedin B. Chromosomal localization and comparison to cDNAs encoding its amphibian homolog ranatensin.</title>
        <authorList>
            <person name="Krane I.M."/>
            <person name="Naylor S.L."/>
            <person name="Helin-Davis D."/>
            <person name="Chin W.W."/>
            <person name="Spindel E.R."/>
        </authorList>
    </citation>
    <scope>NUCLEOTIDE SEQUENCE [MRNA] (ISOFORM 1)</scope>
    <source>
        <tissue>Hypothalamus</tissue>
    </source>
</reference>
<reference key="2">
    <citation type="journal article" date="1990" name="J. Biol. Chem.">
        <authorList>
            <person name="Krane I.M."/>
            <person name="Naylor S.L."/>
            <person name="Helin-Davis D."/>
            <person name="Chin W.W."/>
            <person name="Spindel E.R."/>
        </authorList>
    </citation>
    <scope>ERRATUM OF PUBMED:2458345</scope>
    <scope>SEQUENCE REVISION</scope>
</reference>
<reference key="3">
    <citation type="journal article" date="2006" name="Nature">
        <title>Analysis of the DNA sequence and duplication history of human chromosome 15.</title>
        <authorList>
            <person name="Zody M.C."/>
            <person name="Garber M."/>
            <person name="Sharpe T."/>
            <person name="Young S.K."/>
            <person name="Rowen L."/>
            <person name="O'Neill K."/>
            <person name="Whittaker C.A."/>
            <person name="Kamal M."/>
            <person name="Chang J.L."/>
            <person name="Cuomo C.A."/>
            <person name="Dewar K."/>
            <person name="FitzGerald M.G."/>
            <person name="Kodira C.D."/>
            <person name="Madan A."/>
            <person name="Qin S."/>
            <person name="Yang X."/>
            <person name="Abbasi N."/>
            <person name="Abouelleil A."/>
            <person name="Arachchi H.M."/>
            <person name="Baradarani L."/>
            <person name="Birditt B."/>
            <person name="Bloom S."/>
            <person name="Bloom T."/>
            <person name="Borowsky M.L."/>
            <person name="Burke J."/>
            <person name="Butler J."/>
            <person name="Cook A."/>
            <person name="DeArellano K."/>
            <person name="DeCaprio D."/>
            <person name="Dorris L. III"/>
            <person name="Dors M."/>
            <person name="Eichler E.E."/>
            <person name="Engels R."/>
            <person name="Fahey J."/>
            <person name="Fleetwood P."/>
            <person name="Friedman C."/>
            <person name="Gearin G."/>
            <person name="Hall J.L."/>
            <person name="Hensley G."/>
            <person name="Johnson E."/>
            <person name="Jones C."/>
            <person name="Kamat A."/>
            <person name="Kaur A."/>
            <person name="Locke D.P."/>
            <person name="Madan A."/>
            <person name="Munson G."/>
            <person name="Jaffe D.B."/>
            <person name="Lui A."/>
            <person name="Macdonald P."/>
            <person name="Mauceli E."/>
            <person name="Naylor J.W."/>
            <person name="Nesbitt R."/>
            <person name="Nicol R."/>
            <person name="O'Leary S.B."/>
            <person name="Ratcliffe A."/>
            <person name="Rounsley S."/>
            <person name="She X."/>
            <person name="Sneddon K.M.B."/>
            <person name="Stewart S."/>
            <person name="Sougnez C."/>
            <person name="Stone S.M."/>
            <person name="Topham K."/>
            <person name="Vincent D."/>
            <person name="Wang S."/>
            <person name="Zimmer A.R."/>
            <person name="Birren B.W."/>
            <person name="Hood L."/>
            <person name="Lander E.S."/>
            <person name="Nusbaum C."/>
        </authorList>
    </citation>
    <scope>NUCLEOTIDE SEQUENCE [LARGE SCALE GENOMIC DNA]</scope>
</reference>
<reference key="4">
    <citation type="journal article" date="2004" name="Genome Res.">
        <title>The status, quality, and expansion of the NIH full-length cDNA project: the Mammalian Gene Collection (MGC).</title>
        <authorList>
            <consortium name="The MGC Project Team"/>
        </authorList>
    </citation>
    <scope>NUCLEOTIDE SEQUENCE [LARGE SCALE MRNA] (ISOFORMS 1 AND 2)</scope>
    <scope>VARIANT THR-73</scope>
    <source>
        <tissue>Brain</tissue>
        <tissue>Ovary</tissue>
    </source>
</reference>
<reference key="5">
    <citation type="journal article" date="2019" name="Vet. Res.">
        <title>Role of neuromedin B and its receptor in the innate immune responses against influenza A virus infection in vitro and in vivo.</title>
        <authorList>
            <person name="Yang G."/>
            <person name="Huang H."/>
            <person name="Tang M."/>
            <person name="Cai Z."/>
            <person name="Huang C."/>
            <person name="Qi B."/>
            <person name="Chen J.L."/>
        </authorList>
    </citation>
    <scope>FUNCTION</scope>
    <scope>INDUCTION</scope>
</reference>
<reference key="6">
    <citation type="journal article" date="1999" name="FEBS Lett.">
        <title>Solution structure of neuromedin B by (1)H nuclear magnetic resonance spectroscopy.</title>
        <authorList>
            <person name="Lee S."/>
            <person name="Kim Y."/>
        </authorList>
    </citation>
    <scope>STRUCTURE BY NMR OF 47-56</scope>
</reference>
<proteinExistence type="evidence at protein level"/>
<sequence>MARRAGGARMFGSLLLFALLAAGVAPLSWDLPEPRSRASKIRVHSRGNLWATGHFMGKKSLEPSSPSPLGTAPHTSLRDQRLQLSHDLLGILLLKKALGVSLSRPAPQIQYRRLLVQILQK</sequence>
<gene>
    <name type="primary">NMB</name>
</gene>
<feature type="signal peptide" evidence="1">
    <location>
        <begin position="1"/>
        <end position="24"/>
    </location>
</feature>
<feature type="peptide" id="PRO_0000003017" description="Neuromedin-B-32" evidence="1">
    <location>
        <begin position="25"/>
        <end position="56"/>
    </location>
</feature>
<feature type="peptide" id="PRO_0000003018" description="Neuromedin-B" evidence="1">
    <location>
        <begin position="47"/>
        <end position="56"/>
    </location>
</feature>
<feature type="propeptide" id="PRO_0000003019" evidence="1">
    <location>
        <begin position="60"/>
        <end position="121"/>
    </location>
</feature>
<feature type="modified residue" description="Methionine amide" evidence="1">
    <location>
        <position position="56"/>
    </location>
</feature>
<feature type="splice variant" id="VSP_000548" description="In isoform 2." evidence="5">
    <original>YRRLLVQILQK</original>
    <variation>EAAGTNTAEMTPIMGQTQQRGLDCAHPGKVLNGTLLMAPSGCKS</variation>
    <location>
        <begin position="111"/>
        <end position="121"/>
    </location>
</feature>
<feature type="sequence variant" id="VAR_060369" description="In dbSNP:rs1051168." evidence="3">
    <original>P</original>
    <variation>T</variation>
    <location>
        <position position="73"/>
    </location>
</feature>
<feature type="sequence conflict" description="In Ref. 1; AAA59934." evidence="6" ref="1">
    <original>PLGTAPHTS</original>
    <variation>HWGQLPTPP</variation>
    <location>
        <begin position="68"/>
        <end position="76"/>
    </location>
</feature>
<feature type="helix" evidence="7">
    <location>
        <begin position="49"/>
        <end position="51"/>
    </location>
</feature>
<organism>
    <name type="scientific">Homo sapiens</name>
    <name type="common">Human</name>
    <dbReference type="NCBI Taxonomy" id="9606"/>
    <lineage>
        <taxon>Eukaryota</taxon>
        <taxon>Metazoa</taxon>
        <taxon>Chordata</taxon>
        <taxon>Craniata</taxon>
        <taxon>Vertebrata</taxon>
        <taxon>Euteleostomi</taxon>
        <taxon>Mammalia</taxon>
        <taxon>Eutheria</taxon>
        <taxon>Euarchontoglires</taxon>
        <taxon>Primates</taxon>
        <taxon>Haplorrhini</taxon>
        <taxon>Catarrhini</taxon>
        <taxon>Hominidae</taxon>
        <taxon>Homo</taxon>
    </lineage>
</organism>